<dbReference type="EC" id="1.17.7.4" evidence="1"/>
<dbReference type="EMBL" id="CP001100">
    <property type="protein sequence ID" value="ACF12585.1"/>
    <property type="molecule type" value="Genomic_DNA"/>
</dbReference>
<dbReference type="RefSeq" id="WP_012498669.1">
    <property type="nucleotide sequence ID" value="NC_011026.1"/>
</dbReference>
<dbReference type="SMR" id="B3QSU2"/>
<dbReference type="STRING" id="517418.Ctha_0114"/>
<dbReference type="KEGG" id="cts:Ctha_0114"/>
<dbReference type="eggNOG" id="COG0761">
    <property type="taxonomic scope" value="Bacteria"/>
</dbReference>
<dbReference type="HOGENOM" id="CLU_027486_0_1_10"/>
<dbReference type="OrthoDB" id="9777362at2"/>
<dbReference type="UniPathway" id="UPA00056">
    <property type="reaction ID" value="UER00097"/>
</dbReference>
<dbReference type="UniPathway" id="UPA00059">
    <property type="reaction ID" value="UER00105"/>
</dbReference>
<dbReference type="Proteomes" id="UP000001208">
    <property type="component" value="Chromosome"/>
</dbReference>
<dbReference type="GO" id="GO:0051539">
    <property type="term" value="F:4 iron, 4 sulfur cluster binding"/>
    <property type="evidence" value="ECO:0007669"/>
    <property type="project" value="UniProtKB-UniRule"/>
</dbReference>
<dbReference type="GO" id="GO:0051745">
    <property type="term" value="F:4-hydroxy-3-methylbut-2-enyl diphosphate reductase activity"/>
    <property type="evidence" value="ECO:0007669"/>
    <property type="project" value="UniProtKB-UniRule"/>
</dbReference>
<dbReference type="GO" id="GO:0046872">
    <property type="term" value="F:metal ion binding"/>
    <property type="evidence" value="ECO:0007669"/>
    <property type="project" value="UniProtKB-KW"/>
</dbReference>
<dbReference type="GO" id="GO:0050992">
    <property type="term" value="P:dimethylallyl diphosphate biosynthetic process"/>
    <property type="evidence" value="ECO:0007669"/>
    <property type="project" value="UniProtKB-UniRule"/>
</dbReference>
<dbReference type="GO" id="GO:0019288">
    <property type="term" value="P:isopentenyl diphosphate biosynthetic process, methylerythritol 4-phosphate pathway"/>
    <property type="evidence" value="ECO:0007669"/>
    <property type="project" value="UniProtKB-UniRule"/>
</dbReference>
<dbReference type="GO" id="GO:0016114">
    <property type="term" value="P:terpenoid biosynthetic process"/>
    <property type="evidence" value="ECO:0007669"/>
    <property type="project" value="UniProtKB-UniRule"/>
</dbReference>
<dbReference type="CDD" id="cd13944">
    <property type="entry name" value="lytB_ispH"/>
    <property type="match status" value="1"/>
</dbReference>
<dbReference type="Gene3D" id="3.40.50.11270">
    <property type="match status" value="1"/>
</dbReference>
<dbReference type="Gene3D" id="3.40.1010.20">
    <property type="entry name" value="4-hydroxy-3-methylbut-2-enyl diphosphate reductase, catalytic domain"/>
    <property type="match status" value="2"/>
</dbReference>
<dbReference type="HAMAP" id="MF_00191">
    <property type="entry name" value="IspH"/>
    <property type="match status" value="1"/>
</dbReference>
<dbReference type="InterPro" id="IPR003451">
    <property type="entry name" value="LytB/IspH"/>
</dbReference>
<dbReference type="NCBIfam" id="TIGR00216">
    <property type="entry name" value="ispH_lytB"/>
    <property type="match status" value="1"/>
</dbReference>
<dbReference type="NCBIfam" id="NF002187">
    <property type="entry name" value="PRK01045.1-1"/>
    <property type="match status" value="1"/>
</dbReference>
<dbReference type="PANTHER" id="PTHR30426">
    <property type="entry name" value="4-HYDROXY-3-METHYLBUT-2-ENYL DIPHOSPHATE REDUCTASE"/>
    <property type="match status" value="1"/>
</dbReference>
<dbReference type="PANTHER" id="PTHR30426:SF0">
    <property type="entry name" value="4-HYDROXY-3-METHYLBUT-2-ENYL DIPHOSPHATE REDUCTASE"/>
    <property type="match status" value="1"/>
</dbReference>
<dbReference type="Pfam" id="PF02401">
    <property type="entry name" value="LYTB"/>
    <property type="match status" value="1"/>
</dbReference>
<sequence>MKVNVDMNSGFCFGVQFAIDRVEDEMKASGPLYSLGDIVHNAVEVERLEKLGLKTITIEEFKTLKNTRVFIRAHGEPPSTYKLALENNIELIDATCPVVMKLQQRIKEFYDRGYQVLIYGREGHPEVIGLCGQCNNEAIVLKHADLSDRGETEKIDFSRKTVLFSQTTKDTTGFYELKANLENVFREHHAAQNFDSAATESIVPDFQAKDTICRQVSNRDQKLAAFSKENECVIFVAGRKSSNGKVLFEVCKDANSNTHFIENQSELERAWFLRPDDSLVESVGVCGATSTPMWVMQQVAEHIRATFAAERFVQS</sequence>
<proteinExistence type="inferred from homology"/>
<keyword id="KW-0004">4Fe-4S</keyword>
<keyword id="KW-0408">Iron</keyword>
<keyword id="KW-0411">Iron-sulfur</keyword>
<keyword id="KW-0414">Isoprene biosynthesis</keyword>
<keyword id="KW-0479">Metal-binding</keyword>
<keyword id="KW-0560">Oxidoreductase</keyword>
<keyword id="KW-1185">Reference proteome</keyword>
<organism>
    <name type="scientific">Chloroherpeton thalassium (strain ATCC 35110 / GB-78)</name>
    <dbReference type="NCBI Taxonomy" id="517418"/>
    <lineage>
        <taxon>Bacteria</taxon>
        <taxon>Pseudomonadati</taxon>
        <taxon>Chlorobiota</taxon>
        <taxon>Chlorobiia</taxon>
        <taxon>Chlorobiales</taxon>
        <taxon>Chloroherpetonaceae</taxon>
        <taxon>Chloroherpeton</taxon>
    </lineage>
</organism>
<name>ISPH_CHLT3</name>
<evidence type="ECO:0000255" key="1">
    <source>
        <dbReference type="HAMAP-Rule" id="MF_00191"/>
    </source>
</evidence>
<comment type="function">
    <text evidence="1">Catalyzes the conversion of 1-hydroxy-2-methyl-2-(E)-butenyl 4-diphosphate (HMBPP) into a mixture of isopentenyl diphosphate (IPP) and dimethylallyl diphosphate (DMAPP). Acts in the terminal step of the DOXP/MEP pathway for isoprenoid precursor biosynthesis.</text>
</comment>
<comment type="catalytic activity">
    <reaction evidence="1">
        <text>isopentenyl diphosphate + 2 oxidized [2Fe-2S]-[ferredoxin] + H2O = (2E)-4-hydroxy-3-methylbut-2-enyl diphosphate + 2 reduced [2Fe-2S]-[ferredoxin] + 2 H(+)</text>
        <dbReference type="Rhea" id="RHEA:24488"/>
        <dbReference type="Rhea" id="RHEA-COMP:10000"/>
        <dbReference type="Rhea" id="RHEA-COMP:10001"/>
        <dbReference type="ChEBI" id="CHEBI:15377"/>
        <dbReference type="ChEBI" id="CHEBI:15378"/>
        <dbReference type="ChEBI" id="CHEBI:33737"/>
        <dbReference type="ChEBI" id="CHEBI:33738"/>
        <dbReference type="ChEBI" id="CHEBI:128753"/>
        <dbReference type="ChEBI" id="CHEBI:128769"/>
        <dbReference type="EC" id="1.17.7.4"/>
    </reaction>
</comment>
<comment type="catalytic activity">
    <reaction evidence="1">
        <text>dimethylallyl diphosphate + 2 oxidized [2Fe-2S]-[ferredoxin] + H2O = (2E)-4-hydroxy-3-methylbut-2-enyl diphosphate + 2 reduced [2Fe-2S]-[ferredoxin] + 2 H(+)</text>
        <dbReference type="Rhea" id="RHEA:24825"/>
        <dbReference type="Rhea" id="RHEA-COMP:10000"/>
        <dbReference type="Rhea" id="RHEA-COMP:10001"/>
        <dbReference type="ChEBI" id="CHEBI:15377"/>
        <dbReference type="ChEBI" id="CHEBI:15378"/>
        <dbReference type="ChEBI" id="CHEBI:33737"/>
        <dbReference type="ChEBI" id="CHEBI:33738"/>
        <dbReference type="ChEBI" id="CHEBI:57623"/>
        <dbReference type="ChEBI" id="CHEBI:128753"/>
        <dbReference type="EC" id="1.17.7.4"/>
    </reaction>
</comment>
<comment type="cofactor">
    <cofactor evidence="1">
        <name>[4Fe-4S] cluster</name>
        <dbReference type="ChEBI" id="CHEBI:49883"/>
    </cofactor>
    <text evidence="1">Binds 1 [4Fe-4S] cluster per subunit.</text>
</comment>
<comment type="pathway">
    <text evidence="1">Isoprenoid biosynthesis; dimethylallyl diphosphate biosynthesis; dimethylallyl diphosphate from (2E)-4-hydroxy-3-methylbutenyl diphosphate: step 1/1.</text>
</comment>
<comment type="pathway">
    <text evidence="1">Isoprenoid biosynthesis; isopentenyl diphosphate biosynthesis via DXP pathway; isopentenyl diphosphate from 1-deoxy-D-xylulose 5-phosphate: step 6/6.</text>
</comment>
<comment type="similarity">
    <text evidence="1">Belongs to the IspH family.</text>
</comment>
<protein>
    <recommendedName>
        <fullName evidence="1">4-hydroxy-3-methylbut-2-enyl diphosphate reductase</fullName>
        <shortName evidence="1">HMBPP reductase</shortName>
        <ecNumber evidence="1">1.17.7.4</ecNumber>
    </recommendedName>
</protein>
<reference key="1">
    <citation type="submission" date="2008-06" db="EMBL/GenBank/DDBJ databases">
        <title>Complete sequence of Chloroherpeton thalassium ATCC 35110.</title>
        <authorList>
            <consortium name="US DOE Joint Genome Institute"/>
            <person name="Lucas S."/>
            <person name="Copeland A."/>
            <person name="Lapidus A."/>
            <person name="Glavina del Rio T."/>
            <person name="Dalin E."/>
            <person name="Tice H."/>
            <person name="Bruce D."/>
            <person name="Goodwin L."/>
            <person name="Pitluck S."/>
            <person name="Schmutz J."/>
            <person name="Larimer F."/>
            <person name="Land M."/>
            <person name="Hauser L."/>
            <person name="Kyrpides N."/>
            <person name="Mikhailova N."/>
            <person name="Liu Z."/>
            <person name="Li T."/>
            <person name="Zhao F."/>
            <person name="Overmann J."/>
            <person name="Bryant D.A."/>
            <person name="Richardson P."/>
        </authorList>
    </citation>
    <scope>NUCLEOTIDE SEQUENCE [LARGE SCALE GENOMIC DNA]</scope>
    <source>
        <strain>ATCC 35110 / GB-78</strain>
    </source>
</reference>
<feature type="chain" id="PRO_1000098940" description="4-hydroxy-3-methylbut-2-enyl diphosphate reductase">
    <location>
        <begin position="1"/>
        <end position="315"/>
    </location>
</feature>
<feature type="active site" description="Proton donor" evidence="1">
    <location>
        <position position="126"/>
    </location>
</feature>
<feature type="binding site" evidence="1">
    <location>
        <position position="12"/>
    </location>
    <ligand>
        <name>[4Fe-4S] cluster</name>
        <dbReference type="ChEBI" id="CHEBI:49883"/>
    </ligand>
</feature>
<feature type="binding site" evidence="1">
    <location>
        <position position="40"/>
    </location>
    <ligand>
        <name>(2E)-4-hydroxy-3-methylbut-2-enyl diphosphate</name>
        <dbReference type="ChEBI" id="CHEBI:128753"/>
    </ligand>
</feature>
<feature type="binding site" evidence="1">
    <location>
        <position position="40"/>
    </location>
    <ligand>
        <name>dimethylallyl diphosphate</name>
        <dbReference type="ChEBI" id="CHEBI:57623"/>
    </ligand>
</feature>
<feature type="binding site" evidence="1">
    <location>
        <position position="40"/>
    </location>
    <ligand>
        <name>isopentenyl diphosphate</name>
        <dbReference type="ChEBI" id="CHEBI:128769"/>
    </ligand>
</feature>
<feature type="binding site" evidence="1">
    <location>
        <position position="74"/>
    </location>
    <ligand>
        <name>(2E)-4-hydroxy-3-methylbut-2-enyl diphosphate</name>
        <dbReference type="ChEBI" id="CHEBI:128753"/>
    </ligand>
</feature>
<feature type="binding site" evidence="1">
    <location>
        <position position="74"/>
    </location>
    <ligand>
        <name>dimethylallyl diphosphate</name>
        <dbReference type="ChEBI" id="CHEBI:57623"/>
    </ligand>
</feature>
<feature type="binding site" evidence="1">
    <location>
        <position position="74"/>
    </location>
    <ligand>
        <name>isopentenyl diphosphate</name>
        <dbReference type="ChEBI" id="CHEBI:128769"/>
    </ligand>
</feature>
<feature type="binding site" evidence="1">
    <location>
        <position position="96"/>
    </location>
    <ligand>
        <name>[4Fe-4S] cluster</name>
        <dbReference type="ChEBI" id="CHEBI:49883"/>
    </ligand>
</feature>
<feature type="binding site" evidence="1">
    <location>
        <position position="124"/>
    </location>
    <ligand>
        <name>(2E)-4-hydroxy-3-methylbut-2-enyl diphosphate</name>
        <dbReference type="ChEBI" id="CHEBI:128753"/>
    </ligand>
</feature>
<feature type="binding site" evidence="1">
    <location>
        <position position="124"/>
    </location>
    <ligand>
        <name>dimethylallyl diphosphate</name>
        <dbReference type="ChEBI" id="CHEBI:57623"/>
    </ligand>
</feature>
<feature type="binding site" evidence="1">
    <location>
        <position position="124"/>
    </location>
    <ligand>
        <name>isopentenyl diphosphate</name>
        <dbReference type="ChEBI" id="CHEBI:128769"/>
    </ligand>
</feature>
<feature type="binding site" evidence="1">
    <location>
        <position position="167"/>
    </location>
    <ligand>
        <name>(2E)-4-hydroxy-3-methylbut-2-enyl diphosphate</name>
        <dbReference type="ChEBI" id="CHEBI:128753"/>
    </ligand>
</feature>
<feature type="binding site" evidence="1">
    <location>
        <position position="213"/>
    </location>
    <ligand>
        <name>[4Fe-4S] cluster</name>
        <dbReference type="ChEBI" id="CHEBI:49883"/>
    </ligand>
</feature>
<feature type="binding site" evidence="1">
    <location>
        <position position="241"/>
    </location>
    <ligand>
        <name>(2E)-4-hydroxy-3-methylbut-2-enyl diphosphate</name>
        <dbReference type="ChEBI" id="CHEBI:128753"/>
    </ligand>
</feature>
<feature type="binding site" evidence="1">
    <location>
        <position position="241"/>
    </location>
    <ligand>
        <name>dimethylallyl diphosphate</name>
        <dbReference type="ChEBI" id="CHEBI:57623"/>
    </ligand>
</feature>
<feature type="binding site" evidence="1">
    <location>
        <position position="241"/>
    </location>
    <ligand>
        <name>isopentenyl diphosphate</name>
        <dbReference type="ChEBI" id="CHEBI:128769"/>
    </ligand>
</feature>
<feature type="binding site" evidence="1">
    <location>
        <position position="242"/>
    </location>
    <ligand>
        <name>(2E)-4-hydroxy-3-methylbut-2-enyl diphosphate</name>
        <dbReference type="ChEBI" id="CHEBI:128753"/>
    </ligand>
</feature>
<feature type="binding site" evidence="1">
    <location>
        <position position="242"/>
    </location>
    <ligand>
        <name>dimethylallyl diphosphate</name>
        <dbReference type="ChEBI" id="CHEBI:57623"/>
    </ligand>
</feature>
<feature type="binding site" evidence="1">
    <location>
        <position position="242"/>
    </location>
    <ligand>
        <name>isopentenyl diphosphate</name>
        <dbReference type="ChEBI" id="CHEBI:128769"/>
    </ligand>
</feature>
<feature type="binding site" evidence="1">
    <location>
        <position position="243"/>
    </location>
    <ligand>
        <name>(2E)-4-hydroxy-3-methylbut-2-enyl diphosphate</name>
        <dbReference type="ChEBI" id="CHEBI:128753"/>
    </ligand>
</feature>
<feature type="binding site" evidence="1">
    <location>
        <position position="243"/>
    </location>
    <ligand>
        <name>dimethylallyl diphosphate</name>
        <dbReference type="ChEBI" id="CHEBI:57623"/>
    </ligand>
</feature>
<feature type="binding site" evidence="1">
    <location>
        <position position="243"/>
    </location>
    <ligand>
        <name>isopentenyl diphosphate</name>
        <dbReference type="ChEBI" id="CHEBI:128769"/>
    </ligand>
</feature>
<feature type="binding site" evidence="1">
    <location>
        <position position="290"/>
    </location>
    <ligand>
        <name>(2E)-4-hydroxy-3-methylbut-2-enyl diphosphate</name>
        <dbReference type="ChEBI" id="CHEBI:128753"/>
    </ligand>
</feature>
<feature type="binding site" evidence="1">
    <location>
        <position position="290"/>
    </location>
    <ligand>
        <name>dimethylallyl diphosphate</name>
        <dbReference type="ChEBI" id="CHEBI:57623"/>
    </ligand>
</feature>
<feature type="binding site" evidence="1">
    <location>
        <position position="290"/>
    </location>
    <ligand>
        <name>isopentenyl diphosphate</name>
        <dbReference type="ChEBI" id="CHEBI:128769"/>
    </ligand>
</feature>
<accession>B3QSU2</accession>
<gene>
    <name evidence="1" type="primary">ispH</name>
    <name type="ordered locus">Ctha_0114</name>
</gene>